<gene>
    <name evidence="1" type="primary">ndhA</name>
    <name type="ordered locus">Synpcc7942_1343</name>
</gene>
<accession>Q31NJ6</accession>
<comment type="function">
    <text evidence="1">NDH-1 shuttles electrons from an unknown electron donor, via FMN and iron-sulfur (Fe-S) centers, to quinones in the respiratory and/or the photosynthetic chain. The immediate electron acceptor for the enzyme in this species is believed to be plastoquinone. Couples the redox reaction to proton translocation, and thus conserves the redox energy in a proton gradient.</text>
</comment>
<comment type="catalytic activity">
    <reaction evidence="1">
        <text>a plastoquinone + NADH + (n+1) H(+)(in) = a plastoquinol + NAD(+) + n H(+)(out)</text>
        <dbReference type="Rhea" id="RHEA:42608"/>
        <dbReference type="Rhea" id="RHEA-COMP:9561"/>
        <dbReference type="Rhea" id="RHEA-COMP:9562"/>
        <dbReference type="ChEBI" id="CHEBI:15378"/>
        <dbReference type="ChEBI" id="CHEBI:17757"/>
        <dbReference type="ChEBI" id="CHEBI:57540"/>
        <dbReference type="ChEBI" id="CHEBI:57945"/>
        <dbReference type="ChEBI" id="CHEBI:62192"/>
    </reaction>
</comment>
<comment type="catalytic activity">
    <reaction evidence="1">
        <text>a plastoquinone + NADPH + (n+1) H(+)(in) = a plastoquinol + NADP(+) + n H(+)(out)</text>
        <dbReference type="Rhea" id="RHEA:42612"/>
        <dbReference type="Rhea" id="RHEA-COMP:9561"/>
        <dbReference type="Rhea" id="RHEA-COMP:9562"/>
        <dbReference type="ChEBI" id="CHEBI:15378"/>
        <dbReference type="ChEBI" id="CHEBI:17757"/>
        <dbReference type="ChEBI" id="CHEBI:57783"/>
        <dbReference type="ChEBI" id="CHEBI:58349"/>
        <dbReference type="ChEBI" id="CHEBI:62192"/>
    </reaction>
</comment>
<comment type="subunit">
    <text evidence="1">NDH-1 is composed of at least 11 different subunits.</text>
</comment>
<comment type="subcellular location">
    <subcellularLocation>
        <location evidence="1">Cellular thylakoid membrane</location>
        <topology evidence="1">Multi-pass membrane protein</topology>
    </subcellularLocation>
</comment>
<comment type="similarity">
    <text evidence="1">Belongs to the complex I subunit 1 family.</text>
</comment>
<proteinExistence type="inferred from homology"/>
<name>NU1C_SYNE7</name>
<dbReference type="EC" id="7.1.1.-" evidence="1"/>
<dbReference type="EMBL" id="CP000100">
    <property type="protein sequence ID" value="ABB57373.1"/>
    <property type="molecule type" value="Genomic_DNA"/>
</dbReference>
<dbReference type="SMR" id="Q31NJ6"/>
<dbReference type="STRING" id="1140.Synpcc7942_1343"/>
<dbReference type="PaxDb" id="1140-Synpcc7942_1343"/>
<dbReference type="KEGG" id="syf:Synpcc7942_1343"/>
<dbReference type="eggNOG" id="COG1005">
    <property type="taxonomic scope" value="Bacteria"/>
</dbReference>
<dbReference type="HOGENOM" id="CLU_015134_0_1_3"/>
<dbReference type="OrthoDB" id="9803734at2"/>
<dbReference type="BioCyc" id="MetaCyc:SYNPCC7942_1343-MONOMER"/>
<dbReference type="BioCyc" id="SYNEL:SYNPCC7942_1343-MONOMER"/>
<dbReference type="Proteomes" id="UP000889800">
    <property type="component" value="Chromosome"/>
</dbReference>
<dbReference type="GO" id="GO:0031676">
    <property type="term" value="C:plasma membrane-derived thylakoid membrane"/>
    <property type="evidence" value="ECO:0007669"/>
    <property type="project" value="UniProtKB-SubCell"/>
</dbReference>
<dbReference type="GO" id="GO:0003954">
    <property type="term" value="F:NADH dehydrogenase activity"/>
    <property type="evidence" value="ECO:0007669"/>
    <property type="project" value="TreeGrafter"/>
</dbReference>
<dbReference type="GO" id="GO:0016655">
    <property type="term" value="F:oxidoreductase activity, acting on NAD(P)H, quinone or similar compound as acceptor"/>
    <property type="evidence" value="ECO:0007669"/>
    <property type="project" value="UniProtKB-UniRule"/>
</dbReference>
<dbReference type="GO" id="GO:0048038">
    <property type="term" value="F:quinone binding"/>
    <property type="evidence" value="ECO:0007669"/>
    <property type="project" value="UniProtKB-KW"/>
</dbReference>
<dbReference type="GO" id="GO:0009060">
    <property type="term" value="P:aerobic respiration"/>
    <property type="evidence" value="ECO:0007669"/>
    <property type="project" value="TreeGrafter"/>
</dbReference>
<dbReference type="GO" id="GO:0019684">
    <property type="term" value="P:photosynthesis, light reaction"/>
    <property type="evidence" value="ECO:0007669"/>
    <property type="project" value="UniProtKB-UniRule"/>
</dbReference>
<dbReference type="HAMAP" id="MF_01350">
    <property type="entry name" value="NDH1_NuoH"/>
    <property type="match status" value="1"/>
</dbReference>
<dbReference type="InterPro" id="IPR001694">
    <property type="entry name" value="NADH_UbQ_OxRdtase_su1/FPO"/>
</dbReference>
<dbReference type="InterPro" id="IPR018086">
    <property type="entry name" value="NADH_UbQ_OxRdtase_su1_CS"/>
</dbReference>
<dbReference type="NCBIfam" id="NF004741">
    <property type="entry name" value="PRK06076.1-2"/>
    <property type="match status" value="1"/>
</dbReference>
<dbReference type="NCBIfam" id="NF004744">
    <property type="entry name" value="PRK06076.1-5"/>
    <property type="match status" value="1"/>
</dbReference>
<dbReference type="PANTHER" id="PTHR11432">
    <property type="entry name" value="NADH DEHYDROGENASE SUBUNIT 1"/>
    <property type="match status" value="1"/>
</dbReference>
<dbReference type="PANTHER" id="PTHR11432:SF3">
    <property type="entry name" value="NADH-UBIQUINONE OXIDOREDUCTASE CHAIN 1"/>
    <property type="match status" value="1"/>
</dbReference>
<dbReference type="Pfam" id="PF00146">
    <property type="entry name" value="NADHdh"/>
    <property type="match status" value="1"/>
</dbReference>
<dbReference type="PROSITE" id="PS00667">
    <property type="entry name" value="COMPLEX1_ND1_1"/>
    <property type="match status" value="1"/>
</dbReference>
<dbReference type="PROSITE" id="PS00668">
    <property type="entry name" value="COMPLEX1_ND1_2"/>
    <property type="match status" value="1"/>
</dbReference>
<protein>
    <recommendedName>
        <fullName evidence="1">NAD(P)H-quinone oxidoreductase subunit 1</fullName>
        <ecNumber evidence="1">7.1.1.-</ecNumber>
    </recommendedName>
    <alternativeName>
        <fullName evidence="1">NAD(P)H dehydrogenase I subunit 1</fullName>
    </alternativeName>
    <alternativeName>
        <fullName evidence="1">NDH-1 subunit 1</fullName>
    </alternativeName>
    <alternativeName>
        <fullName evidence="1">NDH-A</fullName>
    </alternativeName>
</protein>
<keyword id="KW-0472">Membrane</keyword>
<keyword id="KW-0520">NAD</keyword>
<keyword id="KW-0521">NADP</keyword>
<keyword id="KW-0618">Plastoquinone</keyword>
<keyword id="KW-0874">Quinone</keyword>
<keyword id="KW-1185">Reference proteome</keyword>
<keyword id="KW-0793">Thylakoid</keyword>
<keyword id="KW-1278">Translocase</keyword>
<keyword id="KW-0812">Transmembrane</keyword>
<keyword id="KW-1133">Transmembrane helix</keyword>
<reference key="1">
    <citation type="submission" date="2005-08" db="EMBL/GenBank/DDBJ databases">
        <title>Complete sequence of chromosome 1 of Synechococcus elongatus PCC 7942.</title>
        <authorList>
            <consortium name="US DOE Joint Genome Institute"/>
            <person name="Copeland A."/>
            <person name="Lucas S."/>
            <person name="Lapidus A."/>
            <person name="Barry K."/>
            <person name="Detter J.C."/>
            <person name="Glavina T."/>
            <person name="Hammon N."/>
            <person name="Israni S."/>
            <person name="Pitluck S."/>
            <person name="Schmutz J."/>
            <person name="Larimer F."/>
            <person name="Land M."/>
            <person name="Kyrpides N."/>
            <person name="Lykidis A."/>
            <person name="Golden S."/>
            <person name="Richardson P."/>
        </authorList>
    </citation>
    <scope>NUCLEOTIDE SEQUENCE [LARGE SCALE GENOMIC DNA]</scope>
    <source>
        <strain>ATCC 33912 / PCC 7942 / FACHB-805</strain>
    </source>
</reference>
<organism>
    <name type="scientific">Synechococcus elongatus (strain ATCC 33912 / PCC 7942 / FACHB-805)</name>
    <name type="common">Anacystis nidulans R2</name>
    <dbReference type="NCBI Taxonomy" id="1140"/>
    <lineage>
        <taxon>Bacteria</taxon>
        <taxon>Bacillati</taxon>
        <taxon>Cyanobacteriota</taxon>
        <taxon>Cyanophyceae</taxon>
        <taxon>Synechococcales</taxon>
        <taxon>Synechococcaceae</taxon>
        <taxon>Synechococcus</taxon>
    </lineage>
</organism>
<sequence length="372" mass="40364">MDRGIDLQGTFIQSLESLGLSPGLSKVLWMPLPMLLMIIAATVGVLVTVWLERKISAAVQQRIGPEYAGPLGVLQSAADGLKLILKEDIIPAKADAFLFTIGPALVVIPVFLSYLIVPFGQELIITNVGAGVFLWIALSSIQPIGLLMSGYASNNKYSLLGGLRAAAQSISYEIPLALAVLAVVMMSNSLSTIDIVDQQSGYGILGWNIWRQPVGFIIFWIAALAECERLPFDLPEAEEELVAGYQTEYAGMKFALFYVGSYVNLILSALLVSILYLGGWEFPIPLDRVADWIGVDPANPILQITTAALGITMTVLKAYLLVFTAILLRWTVPRVRIDQLLDLGWKFLLPISLVNLLVTAALKLTFPVAFGG</sequence>
<feature type="chain" id="PRO_0000240048" description="NAD(P)H-quinone oxidoreductase subunit 1">
    <location>
        <begin position="1"/>
        <end position="372"/>
    </location>
</feature>
<feature type="transmembrane region" description="Helical" evidence="1">
    <location>
        <begin position="27"/>
        <end position="47"/>
    </location>
</feature>
<feature type="transmembrane region" description="Helical" evidence="1">
    <location>
        <begin position="97"/>
        <end position="117"/>
    </location>
</feature>
<feature type="transmembrane region" description="Helical" evidence="1">
    <location>
        <begin position="128"/>
        <end position="148"/>
    </location>
</feature>
<feature type="transmembrane region" description="Helical" evidence="1">
    <location>
        <begin position="176"/>
        <end position="196"/>
    </location>
</feature>
<feature type="transmembrane region" description="Helical" evidence="1">
    <location>
        <begin position="204"/>
        <end position="224"/>
    </location>
</feature>
<feature type="transmembrane region" description="Helical" evidence="1">
    <location>
        <begin position="254"/>
        <end position="274"/>
    </location>
</feature>
<feature type="transmembrane region" description="Helical" evidence="1">
    <location>
        <begin position="308"/>
        <end position="328"/>
    </location>
</feature>
<feature type="transmembrane region" description="Helical" evidence="1">
    <location>
        <begin position="347"/>
        <end position="367"/>
    </location>
</feature>
<evidence type="ECO:0000255" key="1">
    <source>
        <dbReference type="HAMAP-Rule" id="MF_01350"/>
    </source>
</evidence>